<keyword id="KW-0002">3D-structure</keyword>
<keyword id="KW-0010">Activator</keyword>
<keyword id="KW-0961">Cell wall biogenesis/degradation</keyword>
<keyword id="KW-0238">DNA-binding</keyword>
<keyword id="KW-1185">Reference proteome</keyword>
<keyword id="KW-0678">Repressor</keyword>
<keyword id="KW-0804">Transcription</keyword>
<keyword id="KW-0805">Transcription regulation</keyword>
<gene>
    <name evidence="3" type="primary">ipsA</name>
    <name evidence="5" type="ordered locus">Cgl2627</name>
</gene>
<name>IPSA_CORGL</name>
<dbReference type="EMBL" id="BA000036">
    <property type="protein sequence ID" value="BAC00021.1"/>
    <property type="molecule type" value="Genomic_DNA"/>
</dbReference>
<dbReference type="RefSeq" id="NP_601828.1">
    <property type="nucleotide sequence ID" value="NC_003450.3"/>
</dbReference>
<dbReference type="PDB" id="3H5T">
    <property type="method" value="X-ray"/>
    <property type="resolution" value="2.53 A"/>
    <property type="chains" value="A=2-356"/>
</dbReference>
<dbReference type="PDBsum" id="3H5T"/>
<dbReference type="SMR" id="Q8NMF0"/>
<dbReference type="STRING" id="196627.cg2910"/>
<dbReference type="DNASU" id="1020574"/>
<dbReference type="KEGG" id="cgl:Cgl2627"/>
<dbReference type="PATRIC" id="fig|196627.13.peg.2563"/>
<dbReference type="eggNOG" id="COG1609">
    <property type="taxonomic scope" value="Bacteria"/>
</dbReference>
<dbReference type="HOGENOM" id="CLU_037628_6_1_11"/>
<dbReference type="OrthoDB" id="5171752at2"/>
<dbReference type="BioCyc" id="CORYNE:G18NG-12244-MONOMER"/>
<dbReference type="Proteomes" id="UP000000582">
    <property type="component" value="Chromosome"/>
</dbReference>
<dbReference type="GO" id="GO:0003700">
    <property type="term" value="F:DNA-binding transcription factor activity"/>
    <property type="evidence" value="ECO:0007669"/>
    <property type="project" value="TreeGrafter"/>
</dbReference>
<dbReference type="GO" id="GO:0000976">
    <property type="term" value="F:transcription cis-regulatory region binding"/>
    <property type="evidence" value="ECO:0007669"/>
    <property type="project" value="TreeGrafter"/>
</dbReference>
<dbReference type="GO" id="GO:0071555">
    <property type="term" value="P:cell wall organization"/>
    <property type="evidence" value="ECO:0007669"/>
    <property type="project" value="UniProtKB-KW"/>
</dbReference>
<dbReference type="CDD" id="cd01392">
    <property type="entry name" value="HTH_LacI"/>
    <property type="match status" value="1"/>
</dbReference>
<dbReference type="CDD" id="cd06279">
    <property type="entry name" value="PBP1_LacI-like"/>
    <property type="match status" value="1"/>
</dbReference>
<dbReference type="Gene3D" id="3.40.50.2300">
    <property type="match status" value="2"/>
</dbReference>
<dbReference type="Gene3D" id="1.10.260.40">
    <property type="entry name" value="lambda repressor-like DNA-binding domains"/>
    <property type="match status" value="1"/>
</dbReference>
<dbReference type="InterPro" id="IPR000843">
    <property type="entry name" value="HTH_LacI"/>
</dbReference>
<dbReference type="InterPro" id="IPR010982">
    <property type="entry name" value="Lambda_DNA-bd_dom_sf"/>
</dbReference>
<dbReference type="InterPro" id="IPR001761">
    <property type="entry name" value="Peripla_BP/Lac1_sug-bd_dom"/>
</dbReference>
<dbReference type="InterPro" id="IPR028082">
    <property type="entry name" value="Peripla_BP_I"/>
</dbReference>
<dbReference type="PANTHER" id="PTHR30146">
    <property type="entry name" value="LACI-RELATED TRANSCRIPTIONAL REPRESSOR"/>
    <property type="match status" value="1"/>
</dbReference>
<dbReference type="PANTHER" id="PTHR30146:SF138">
    <property type="entry name" value="TRANSCRIPTIONAL REGULATORY PROTEIN"/>
    <property type="match status" value="1"/>
</dbReference>
<dbReference type="Pfam" id="PF00532">
    <property type="entry name" value="Peripla_BP_1"/>
    <property type="match status" value="1"/>
</dbReference>
<dbReference type="SMART" id="SM00354">
    <property type="entry name" value="HTH_LACI"/>
    <property type="match status" value="1"/>
</dbReference>
<dbReference type="SUPFAM" id="SSF47413">
    <property type="entry name" value="lambda repressor-like DNA-binding domains"/>
    <property type="match status" value="1"/>
</dbReference>
<dbReference type="SUPFAM" id="SSF53822">
    <property type="entry name" value="Periplasmic binding protein-like I"/>
    <property type="match status" value="1"/>
</dbReference>
<dbReference type="PROSITE" id="PS50932">
    <property type="entry name" value="HTH_LACI_2"/>
    <property type="match status" value="1"/>
</dbReference>
<reference key="1">
    <citation type="journal article" date="2003" name="Appl. Microbiol. Biotechnol.">
        <title>The Corynebacterium glutamicum genome: features and impacts on biotechnological processes.</title>
        <authorList>
            <person name="Ikeda M."/>
            <person name="Nakagawa S."/>
        </authorList>
    </citation>
    <scope>NUCLEOTIDE SEQUENCE [LARGE SCALE GENOMIC DNA]</scope>
    <source>
        <strain>ATCC 13032 / DSM 20300 / JCM 1318 / BCRC 11384 / CCUG 27702 / LMG 3730 / NBRC 12168 / NCIMB 10025 / NRRL B-2784 / 534</strain>
    </source>
</reference>
<reference key="2">
    <citation type="journal article" date="2013" name="BMC Biol.">
        <title>IpsA, a novel LacI-type regulator, is required for inositol-derived lipid formation in Corynebacteria and Mycobacteria.</title>
        <authorList>
            <person name="Baumgart M."/>
            <person name="Luder K."/>
            <person name="Grover S."/>
            <person name="Gaetgens C."/>
            <person name="Besra G.S."/>
            <person name="Frunzke J."/>
        </authorList>
    </citation>
    <scope>FUNCTION</scope>
    <scope>DNA-BINDING</scope>
    <scope>ACTIVITY REGULATION</scope>
    <scope>SUBUNIT</scope>
    <scope>DISRUPTION PHENOTYPE</scope>
    <source>
        <strain>ATCC 13032 / DSM 20300 / JCM 1318 / BCRC 11384 / CCUG 27702 / LMG 3730 / NBRC 12168 / NCIMB 10025 / NRRL B-2784 / 534</strain>
    </source>
</reference>
<reference key="3">
    <citation type="submission" date="2009-04" db="PDB data bank">
        <title>Crystal structure of a transcriptional regulator, Lacl family protein from Corynebacterium glutamicum.</title>
        <authorList>
            <person name="Palani K."/>
            <person name="Burley S.K."/>
            <person name="Swaminathan S."/>
        </authorList>
    </citation>
    <scope>X-RAY CRYSTALLOGRAPHY (2.53 ANGSTROMS) OF 2-356</scope>
</reference>
<protein>
    <recommendedName>
        <fullName evidence="4">HTH-type transcriptional regulator IpsA</fullName>
    </recommendedName>
</protein>
<accession>Q8NMF0</accession>
<sequence>MGRKQQYGTLASIAAKLGISRTTVSNAYNRPEQLSAELRQRILDTAEDMGYLGPDPVARSLRTRRAGAIGVLLTEDLTYAFEDMASVDFLAGVAQAAGDTQLTLIPASPASSVDHVSAQQLVNNAAVDGVVIYSVAKGDPHIDAIRARGLPAVIADQPAREEGMPFIAPNNRKAIAPAAQALIDAGHRKIGILSIRLDRANNDGEVTRERLENAQYQVQRDRVRGAMEVFIEAGIDPGTVPIMECWINNRQHNFEVAKELLETHPDLTAVLCTVDALAFGVLEYLKSVGKSAPADLSLTGFDGTHMALARDLTTVIQPNKLKGFKAGETLLKMIDKEYVEPEVELETSFHPGSTVAPI</sequence>
<proteinExistence type="evidence at protein level"/>
<evidence type="ECO:0000255" key="1">
    <source>
        <dbReference type="PROSITE-ProRule" id="PRU00111"/>
    </source>
</evidence>
<evidence type="ECO:0000269" key="2">
    <source>
    </source>
</evidence>
<evidence type="ECO:0000303" key="3">
    <source>
    </source>
</evidence>
<evidence type="ECO:0000305" key="4"/>
<evidence type="ECO:0000312" key="5">
    <source>
        <dbReference type="EMBL" id="BAC00021.1"/>
    </source>
</evidence>
<feature type="chain" id="PRO_0000442345" description="HTH-type transcriptional regulator IpsA">
    <location>
        <begin position="1"/>
        <end position="358"/>
    </location>
</feature>
<feature type="domain" description="HTH lacI-type" evidence="1">
    <location>
        <begin position="8"/>
        <end position="63"/>
    </location>
</feature>
<feature type="DNA-binding region" description="H-T-H motif" evidence="1">
    <location>
        <begin position="10"/>
        <end position="29"/>
    </location>
</feature>
<comment type="function">
    <text evidence="2">Plays a role in the regulation of cell wall biogenesis. Inositol-dependent transcriptional activator of ino1, which encodes inositol phosphate synthase. Also regulates other target genes, which are most likely involved in the synthesis of inositol-derived cell wall components and mycothiol. Acts by binding to a conserved palindromic motif within the promoter regions.</text>
</comment>
<comment type="activity regulation">
    <text evidence="2">Myo-inositol causes the dissociation of the IpsA-DNA complex in vitro.</text>
</comment>
<comment type="subunit">
    <text evidence="2">Homodimer.</text>
</comment>
<comment type="disruption phenotype">
    <text evidence="2">Deletion mutant shows growth defect and altered morphology. Mycothiol biosynthesis and phosphatidylinositol-based glycolipid synthesis are abolished.</text>
</comment>
<organism>
    <name type="scientific">Corynebacterium glutamicum (strain ATCC 13032 / DSM 20300 / JCM 1318 / BCRC 11384 / CCUG 27702 / LMG 3730 / NBRC 12168 / NCIMB 10025 / NRRL B-2784 / 534)</name>
    <dbReference type="NCBI Taxonomy" id="196627"/>
    <lineage>
        <taxon>Bacteria</taxon>
        <taxon>Bacillati</taxon>
        <taxon>Actinomycetota</taxon>
        <taxon>Actinomycetes</taxon>
        <taxon>Mycobacteriales</taxon>
        <taxon>Corynebacteriaceae</taxon>
        <taxon>Corynebacterium</taxon>
    </lineage>
</organism>